<protein>
    <recommendedName>
        <fullName evidence="3">Cytochrome P450 monooxygenase aunB</fullName>
        <ecNumber evidence="2">1.-.-.-</ecNumber>
    </recommendedName>
    <alternativeName>
        <fullName evidence="3">Aurasperone B biosynthesis cluster protein B</fullName>
    </alternativeName>
</protein>
<proteinExistence type="evidence at protein level"/>
<reference key="1">
    <citation type="journal article" date="2011" name="Genome Res.">
        <title>Comparative genomics of citric-acid-producing Aspergillus niger ATCC 1015 versus enzyme-producing CBS 513.88.</title>
        <authorList>
            <person name="Andersen M.R."/>
            <person name="Salazar M.P."/>
            <person name="Schaap P.J."/>
            <person name="van de Vondervoort P.J.I."/>
            <person name="Culley D."/>
            <person name="Thykaer J."/>
            <person name="Frisvad J.C."/>
            <person name="Nielsen K.F."/>
            <person name="Albang R."/>
            <person name="Albermann K."/>
            <person name="Berka R.M."/>
            <person name="Braus G.H."/>
            <person name="Braus-Stromeyer S.A."/>
            <person name="Corrochano L.M."/>
            <person name="Dai Z."/>
            <person name="van Dijck P.W.M."/>
            <person name="Hofmann G."/>
            <person name="Lasure L.L."/>
            <person name="Magnuson J.K."/>
            <person name="Menke H."/>
            <person name="Meijer M."/>
            <person name="Meijer S.L."/>
            <person name="Nielsen J.B."/>
            <person name="Nielsen M.L."/>
            <person name="van Ooyen A.J.J."/>
            <person name="Pel H.J."/>
            <person name="Poulsen L."/>
            <person name="Samson R.A."/>
            <person name="Stam H."/>
            <person name="Tsang A."/>
            <person name="van den Brink J.M."/>
            <person name="Atkins A."/>
            <person name="Aerts A."/>
            <person name="Shapiro H."/>
            <person name="Pangilinan J."/>
            <person name="Salamov A."/>
            <person name="Lou Y."/>
            <person name="Lindquist E."/>
            <person name="Lucas S."/>
            <person name="Grimwood J."/>
            <person name="Grigoriev I.V."/>
            <person name="Kubicek C.P."/>
            <person name="Martinez D."/>
            <person name="van Peij N.N.M.E."/>
            <person name="Roubos J.A."/>
            <person name="Nielsen J."/>
            <person name="Baker S.E."/>
        </authorList>
    </citation>
    <scope>NUCLEOTIDE SEQUENCE [LARGE SCALE GENOMIC DNA]</scope>
    <source>
        <strain>ATCC 1015 / CBS 113.46 / FGSC A1144 / LSHB Ac4 / NCTC 3858a / NRRL 328 / USDA 3528.7</strain>
    </source>
</reference>
<reference key="2">
    <citation type="journal article" date="2019" name="Biochemistry">
        <title>Biaryl-forming enzymes from Aspergilli exhibit substrate-dependent stereoselectivity.</title>
        <authorList>
            <person name="Obermaier S."/>
            <person name="Mueller M."/>
        </authorList>
    </citation>
    <scope>FUNCTION</scope>
    <scope>DISRUPTION PHENOTYPE</scope>
    <scope>CATALYTIC ACTIVITY</scope>
    <scope>PATHWAY</scope>
</reference>
<gene>
    <name evidence="3" type="primary">aunB</name>
    <name evidence="6" type="ORF">ASPNIDRAFT_136667</name>
</gene>
<keyword id="KW-0349">Heme</keyword>
<keyword id="KW-0408">Iron</keyword>
<keyword id="KW-0479">Metal-binding</keyword>
<keyword id="KW-0503">Monooxygenase</keyword>
<keyword id="KW-0560">Oxidoreductase</keyword>
<evidence type="ECO:0000250" key="1">
    <source>
        <dbReference type="UniProtKB" id="P04798"/>
    </source>
</evidence>
<evidence type="ECO:0000269" key="2">
    <source>
    </source>
</evidence>
<evidence type="ECO:0000303" key="3">
    <source>
    </source>
</evidence>
<evidence type="ECO:0000305" key="4"/>
<evidence type="ECO:0000305" key="5">
    <source>
    </source>
</evidence>
<evidence type="ECO:0000312" key="6">
    <source>
        <dbReference type="EMBL" id="EHA27204.1"/>
    </source>
</evidence>
<feature type="chain" id="PRO_0000449885" description="Cytochrome P450 monooxygenase aunB">
    <location>
        <begin position="1" status="less than"/>
        <end position="159" status="greater than"/>
    </location>
</feature>
<feature type="binding site" description="axial binding residue" evidence="1">
    <location>
        <position position="134"/>
    </location>
    <ligand>
        <name>heme</name>
        <dbReference type="ChEBI" id="CHEBI:30413"/>
    </ligand>
    <ligandPart>
        <name>Fe</name>
        <dbReference type="ChEBI" id="CHEBI:18248"/>
    </ligandPart>
</feature>
<feature type="non-terminal residue" evidence="6">
    <location>
        <position position="1"/>
    </location>
</feature>
<feature type="non-terminal residue" evidence="6">
    <location>
        <position position="159"/>
    </location>
</feature>
<comment type="function">
    <text evidence="2 5">Cytochrome P450 monooxygenase; part of the gene cluster that mediates the biosynthesis of aurasperone B, a dimeric gamma-naphthopyrone (PubMed:31067027). The first step in the biosynthesis of aurasperone B is the production of gamma-naphthopyrone precursor YWA1 by the non-reducing polyketide synthase albA, via condensation of one acetyl-CoA starter unit with 6 malonyl-CoA units (PubMed:31067027). YWA1 is then methylated by aunE at position C-6 to yield foncesin which is further methylated at position C-8 by aunD to produce fonsecin B (Probable). A key enzyme in the biosynthetic pathway is the cytochrome P450 monooxygenase aunB which catalyzes the oxidative dimerization of fonsecin B to aurasperone B (PubMed:31067027). AunB also catalyzes the oxidative dimerization of rubrofusarin B into aurasperone A (PubMed:31067027).</text>
</comment>
<comment type="catalytic activity">
    <reaction evidence="2">
        <text>2 fonsecin B + NADPH + O2 + H(+) = aurasperone B + NADP(+) + 2 H2O</text>
        <dbReference type="Rhea" id="RHEA:62788"/>
        <dbReference type="ChEBI" id="CHEBI:15377"/>
        <dbReference type="ChEBI" id="CHEBI:15378"/>
        <dbReference type="ChEBI" id="CHEBI:15379"/>
        <dbReference type="ChEBI" id="CHEBI:57783"/>
        <dbReference type="ChEBI" id="CHEBI:58349"/>
        <dbReference type="ChEBI" id="CHEBI:133756"/>
        <dbReference type="ChEBI" id="CHEBI:133825"/>
    </reaction>
    <physiologicalReaction direction="left-to-right" evidence="2">
        <dbReference type="Rhea" id="RHEA:62789"/>
    </physiologicalReaction>
</comment>
<comment type="catalytic activity">
    <reaction evidence="2">
        <text>2 rubrofusarin B + NADPH + O2 + H(+) = aurasperone A + NADP(+) + 2 H2O</text>
        <dbReference type="Rhea" id="RHEA:62796"/>
        <dbReference type="ChEBI" id="CHEBI:15377"/>
        <dbReference type="ChEBI" id="CHEBI:15378"/>
        <dbReference type="ChEBI" id="CHEBI:15379"/>
        <dbReference type="ChEBI" id="CHEBI:57783"/>
        <dbReference type="ChEBI" id="CHEBI:58349"/>
        <dbReference type="ChEBI" id="CHEBI:145920"/>
        <dbReference type="ChEBI" id="CHEBI:146001"/>
    </reaction>
    <physiologicalReaction direction="left-to-right" evidence="2">
        <dbReference type="Rhea" id="RHEA:62797"/>
    </physiologicalReaction>
</comment>
<comment type="cofactor">
    <cofactor evidence="1">
        <name>heme</name>
        <dbReference type="ChEBI" id="CHEBI:30413"/>
    </cofactor>
</comment>
<comment type="pathway">
    <text evidence="2">Secondary metabolite biosynthesis.</text>
</comment>
<comment type="disruption phenotype">
    <text evidence="2">Leads to the accumulation of the monomeric compounds fonsecin B and flavasperone.</text>
</comment>
<comment type="similarity">
    <text evidence="4">Belongs to the cytochrome P450 family.</text>
</comment>
<comment type="caution">
    <text evidence="4">The sequence misses both the N-terminal and C-terminal parts. The correct gene model with the complete protein sequence could not be recovered from the submitted genomic sequence.</text>
</comment>
<organism>
    <name type="scientific">Aspergillus niger (strain ATCC 1015 / CBS 113.46 / FGSC A1144 / LSHB Ac4 / NCTC 3858a / NRRL 328 / USDA 3528.7)</name>
    <dbReference type="NCBI Taxonomy" id="380704"/>
    <lineage>
        <taxon>Eukaryota</taxon>
        <taxon>Fungi</taxon>
        <taxon>Dikarya</taxon>
        <taxon>Ascomycota</taxon>
        <taxon>Pezizomycotina</taxon>
        <taxon>Eurotiomycetes</taxon>
        <taxon>Eurotiomycetidae</taxon>
        <taxon>Eurotiales</taxon>
        <taxon>Aspergillaceae</taxon>
        <taxon>Aspergillus</taxon>
        <taxon>Aspergillus subgen. Circumdati</taxon>
    </lineage>
</organism>
<name>AUNB_ASPNA</name>
<accession>G3XSI3</accession>
<sequence length="159" mass="18003">TADNMLNALFYFLLRNPQCLKRLEEEVSCVGATVNELSDDRLAKLPYLNACINETFRIAPAFNGGILQRVSCGATVDGVYVPPGVAVSVDHYTLGHDPQYWVKPDVFNPERWIDPDCKDNFKASRPFLIGARQCPGRQMAYQMFRVCVAKLVYLYTFEL</sequence>
<dbReference type="EC" id="1.-.-.-" evidence="2"/>
<dbReference type="EMBL" id="ACJE01000004">
    <property type="protein sequence ID" value="EHA27204.1"/>
    <property type="molecule type" value="Genomic_DNA"/>
</dbReference>
<dbReference type="SMR" id="G3XSI3"/>
<dbReference type="STRING" id="380704.G3XSI3"/>
<dbReference type="HOGENOM" id="CLU_001570_14_7_1"/>
<dbReference type="OrthoDB" id="42007at5052"/>
<dbReference type="Proteomes" id="UP000009038">
    <property type="component" value="Unassembled WGS sequence"/>
</dbReference>
<dbReference type="GO" id="GO:0020037">
    <property type="term" value="F:heme binding"/>
    <property type="evidence" value="ECO:0007669"/>
    <property type="project" value="InterPro"/>
</dbReference>
<dbReference type="GO" id="GO:0005506">
    <property type="term" value="F:iron ion binding"/>
    <property type="evidence" value="ECO:0007669"/>
    <property type="project" value="InterPro"/>
</dbReference>
<dbReference type="GO" id="GO:0004497">
    <property type="term" value="F:monooxygenase activity"/>
    <property type="evidence" value="ECO:0007669"/>
    <property type="project" value="UniProtKB-KW"/>
</dbReference>
<dbReference type="GO" id="GO:0016705">
    <property type="term" value="F:oxidoreductase activity, acting on paired donors, with incorporation or reduction of molecular oxygen"/>
    <property type="evidence" value="ECO:0007669"/>
    <property type="project" value="InterPro"/>
</dbReference>
<dbReference type="GO" id="GO:0009058">
    <property type="term" value="P:biosynthetic process"/>
    <property type="evidence" value="ECO:0007669"/>
    <property type="project" value="UniProtKB-ARBA"/>
</dbReference>
<dbReference type="Gene3D" id="1.10.630.10">
    <property type="entry name" value="Cytochrome P450"/>
    <property type="match status" value="1"/>
</dbReference>
<dbReference type="InterPro" id="IPR001128">
    <property type="entry name" value="Cyt_P450"/>
</dbReference>
<dbReference type="InterPro" id="IPR002401">
    <property type="entry name" value="Cyt_P450_E_grp-I"/>
</dbReference>
<dbReference type="InterPro" id="IPR036396">
    <property type="entry name" value="Cyt_P450_sf"/>
</dbReference>
<dbReference type="InterPro" id="IPR050121">
    <property type="entry name" value="Cytochrome_P450_monoxygenase"/>
</dbReference>
<dbReference type="PANTHER" id="PTHR24305">
    <property type="entry name" value="CYTOCHROME P450"/>
    <property type="match status" value="1"/>
</dbReference>
<dbReference type="PANTHER" id="PTHR24305:SF210">
    <property type="entry name" value="CYTOCHROME P450 MONOOXYGENASE ASQL-RELATED"/>
    <property type="match status" value="1"/>
</dbReference>
<dbReference type="Pfam" id="PF00067">
    <property type="entry name" value="p450"/>
    <property type="match status" value="1"/>
</dbReference>
<dbReference type="PRINTS" id="PR00463">
    <property type="entry name" value="EP450I"/>
</dbReference>
<dbReference type="PRINTS" id="PR00385">
    <property type="entry name" value="P450"/>
</dbReference>
<dbReference type="SUPFAM" id="SSF48264">
    <property type="entry name" value="Cytochrome P450"/>
    <property type="match status" value="1"/>
</dbReference>